<protein>
    <recommendedName>
        <fullName>Gap junction gamma-1 protein</fullName>
    </recommendedName>
    <alternativeName>
        <fullName>Gap junction alpha-7 protein</fullName>
    </alternativeName>
</protein>
<proteinExistence type="evidence at transcript level"/>
<feature type="chain" id="PRO_0000369544" description="Gap junction gamma-1 protein">
    <location>
        <begin position="1"/>
        <end position="377"/>
    </location>
</feature>
<feature type="topological domain" description="Cytoplasmic" evidence="2">
    <location>
        <begin position="1"/>
        <end position="18"/>
    </location>
</feature>
<feature type="transmembrane region" description="Helical" evidence="2">
    <location>
        <begin position="19"/>
        <end position="39"/>
    </location>
</feature>
<feature type="topological domain" description="Extracellular" evidence="2">
    <location>
        <begin position="40"/>
        <end position="75"/>
    </location>
</feature>
<feature type="transmembrane region" description="Helical" evidence="2">
    <location>
        <begin position="76"/>
        <end position="96"/>
    </location>
</feature>
<feature type="topological domain" description="Cytoplasmic" evidence="2">
    <location>
        <begin position="97"/>
        <end position="174"/>
    </location>
</feature>
<feature type="transmembrane region" description="Helical" evidence="2">
    <location>
        <begin position="175"/>
        <end position="197"/>
    </location>
</feature>
<feature type="topological domain" description="Extracellular" evidence="2">
    <location>
        <begin position="198"/>
        <end position="228"/>
    </location>
</feature>
<feature type="transmembrane region" description="Helical" evidence="2">
    <location>
        <begin position="229"/>
        <end position="249"/>
    </location>
</feature>
<feature type="topological domain" description="Cytoplasmic" evidence="2">
    <location>
        <begin position="250"/>
        <end position="377"/>
    </location>
</feature>
<feature type="region of interest" description="Disordered" evidence="3">
    <location>
        <begin position="129"/>
        <end position="163"/>
    </location>
</feature>
<feature type="region of interest" description="Disordered" evidence="3">
    <location>
        <begin position="266"/>
        <end position="286"/>
    </location>
</feature>
<feature type="region of interest" description="Disordered" evidence="3">
    <location>
        <begin position="341"/>
        <end position="377"/>
    </location>
</feature>
<feature type="compositionally biased region" description="Acidic residues" evidence="3">
    <location>
        <begin position="131"/>
        <end position="151"/>
    </location>
</feature>
<feature type="compositionally biased region" description="Polar residues" evidence="3">
    <location>
        <begin position="344"/>
        <end position="362"/>
    </location>
</feature>
<accession>Q7ZXS7</accession>
<dbReference type="EMBL" id="BC044270">
    <property type="protein sequence ID" value="AAH44270.1"/>
    <property type="molecule type" value="mRNA"/>
</dbReference>
<dbReference type="RefSeq" id="NP_001079553.1">
    <property type="nucleotide sequence ID" value="NM_001086084.1"/>
</dbReference>
<dbReference type="SMR" id="Q7ZXS7"/>
<dbReference type="DNASU" id="379240"/>
<dbReference type="GeneID" id="379240"/>
<dbReference type="KEGG" id="xla:379240"/>
<dbReference type="AGR" id="Xenbase:XB-GENE-5905192"/>
<dbReference type="CTD" id="379240"/>
<dbReference type="Xenbase" id="XB-GENE-5905192">
    <property type="gene designation" value="gja7.S"/>
</dbReference>
<dbReference type="OMA" id="KGTAACD"/>
<dbReference type="OrthoDB" id="10061722at2759"/>
<dbReference type="Proteomes" id="UP000186698">
    <property type="component" value="Chromosome 9_10S"/>
</dbReference>
<dbReference type="Bgee" id="379240">
    <property type="expression patterns" value="Expressed in egg cell and 15 other cell types or tissues"/>
</dbReference>
<dbReference type="GO" id="GO:0005922">
    <property type="term" value="C:connexin complex"/>
    <property type="evidence" value="ECO:0000318"/>
    <property type="project" value="GO_Central"/>
</dbReference>
<dbReference type="GO" id="GO:0005243">
    <property type="term" value="F:gap junction channel activity"/>
    <property type="evidence" value="ECO:0000318"/>
    <property type="project" value="GO_Central"/>
</dbReference>
<dbReference type="GO" id="GO:0007267">
    <property type="term" value="P:cell-cell signaling"/>
    <property type="evidence" value="ECO:0000318"/>
    <property type="project" value="GO_Central"/>
</dbReference>
<dbReference type="FunFam" id="1.20.1440.80:FF:000003">
    <property type="entry name" value="Gap junction protein"/>
    <property type="match status" value="1"/>
</dbReference>
<dbReference type="Gene3D" id="1.20.1440.80">
    <property type="entry name" value="Gap junction channel protein cysteine-rich domain"/>
    <property type="match status" value="1"/>
</dbReference>
<dbReference type="InterPro" id="IPR000500">
    <property type="entry name" value="Connexin"/>
</dbReference>
<dbReference type="InterPro" id="IPR019570">
    <property type="entry name" value="Connexin_CCC"/>
</dbReference>
<dbReference type="InterPro" id="IPR017990">
    <property type="entry name" value="Connexin_CS"/>
</dbReference>
<dbReference type="InterPro" id="IPR013092">
    <property type="entry name" value="Connexin_N"/>
</dbReference>
<dbReference type="InterPro" id="IPR038359">
    <property type="entry name" value="Connexin_N_sf"/>
</dbReference>
<dbReference type="PANTHER" id="PTHR11984">
    <property type="entry name" value="CONNEXIN"/>
    <property type="match status" value="1"/>
</dbReference>
<dbReference type="PANTHER" id="PTHR11984:SF117">
    <property type="entry name" value="GAP JUNCTION PROTEIN"/>
    <property type="match status" value="1"/>
</dbReference>
<dbReference type="Pfam" id="PF00029">
    <property type="entry name" value="Connexin"/>
    <property type="match status" value="1"/>
</dbReference>
<dbReference type="PRINTS" id="PR00206">
    <property type="entry name" value="CONNEXIN"/>
</dbReference>
<dbReference type="SMART" id="SM00037">
    <property type="entry name" value="CNX"/>
    <property type="match status" value="1"/>
</dbReference>
<dbReference type="SMART" id="SM01089">
    <property type="entry name" value="Connexin_CCC"/>
    <property type="match status" value="1"/>
</dbReference>
<dbReference type="PROSITE" id="PS00407">
    <property type="entry name" value="CONNEXINS_1"/>
    <property type="match status" value="1"/>
</dbReference>
<dbReference type="PROSITE" id="PS00408">
    <property type="entry name" value="CONNEXINS_2"/>
    <property type="match status" value="1"/>
</dbReference>
<reference key="1">
    <citation type="submission" date="2003-01" db="EMBL/GenBank/DDBJ databases">
        <authorList>
            <consortium name="NIH - Xenopus Gene Collection (XGC) project"/>
        </authorList>
    </citation>
    <scope>NUCLEOTIDE SEQUENCE [LARGE SCALE MRNA]</scope>
    <source>
        <tissue>Embryo</tissue>
    </source>
</reference>
<evidence type="ECO:0000250" key="1"/>
<evidence type="ECO:0000255" key="2"/>
<evidence type="ECO:0000256" key="3">
    <source>
        <dbReference type="SAM" id="MobiDB-lite"/>
    </source>
</evidence>
<evidence type="ECO:0000305" key="4"/>
<keyword id="KW-0965">Cell junction</keyword>
<keyword id="KW-1003">Cell membrane</keyword>
<keyword id="KW-0303">Gap junction</keyword>
<keyword id="KW-0472">Membrane</keyword>
<keyword id="KW-1185">Reference proteome</keyword>
<keyword id="KW-0812">Transmembrane</keyword>
<keyword id="KW-1133">Transmembrane helix</keyword>
<sequence>MSWSFLTRLLEEINNHSTFVGKIWLTVLIIFRIVLTAVGGESIYYDEQSKFTCNTHQPGCENVCYDAFAPLSHVRFWVFQIILITTPSIMYLGFAMHRIARQPDEQIRRLEKTKSKKRAPIIHRGAMRDYEEAEDNQEEDPMICEEEEPEKDSEKGDKKKHDGRRRIKQDGLMKVYVLQLLFRSVFEVGFLMGQYVLYGFEVIPFFVCSRNPCPHTVDCFVSRPTEKTIFLLIMYAVSALCLFLNLCELFHLGIGGIRDALRQKRKEIQESRKKKPSAPPNYHSVLKKGKLPNGKPVFPGNGVSEGFEMPVHELDRLRQHLKLAQEHLDLAFHLNPSADIAHASRSSSPEANSIAAEQNRLNLAQEKGVGSREKSGL</sequence>
<name>CXG1_XENLA</name>
<gene>
    <name type="primary">gjc1</name>
    <name type="synonym">gja7</name>
</gene>
<comment type="function">
    <text evidence="1">One gap junction consists of a cluster of closely packed pairs of transmembrane channels, the connexons, through which materials of low MW diffuse from one cell to a neighboring cell.</text>
</comment>
<comment type="subunit">
    <text evidence="1">A connexon is composed of a hexamer of connexins.</text>
</comment>
<comment type="subcellular location">
    <subcellularLocation>
        <location evidence="1">Cell membrane</location>
        <topology evidence="1">Multi-pass membrane protein</topology>
    </subcellularLocation>
    <subcellularLocation>
        <location evidence="1">Cell junction</location>
        <location evidence="1">Gap junction</location>
    </subcellularLocation>
</comment>
<comment type="similarity">
    <text evidence="4">Belongs to the connexin family. Gamma-type subfamily.</text>
</comment>
<organism>
    <name type="scientific">Xenopus laevis</name>
    <name type="common">African clawed frog</name>
    <dbReference type="NCBI Taxonomy" id="8355"/>
    <lineage>
        <taxon>Eukaryota</taxon>
        <taxon>Metazoa</taxon>
        <taxon>Chordata</taxon>
        <taxon>Craniata</taxon>
        <taxon>Vertebrata</taxon>
        <taxon>Euteleostomi</taxon>
        <taxon>Amphibia</taxon>
        <taxon>Batrachia</taxon>
        <taxon>Anura</taxon>
        <taxon>Pipoidea</taxon>
        <taxon>Pipidae</taxon>
        <taxon>Xenopodinae</taxon>
        <taxon>Xenopus</taxon>
        <taxon>Xenopus</taxon>
    </lineage>
</organism>